<name>PANC_BACC2</name>
<keyword id="KW-0067">ATP-binding</keyword>
<keyword id="KW-0963">Cytoplasm</keyword>
<keyword id="KW-0436">Ligase</keyword>
<keyword id="KW-0547">Nucleotide-binding</keyword>
<keyword id="KW-0566">Pantothenate biosynthesis</keyword>
<dbReference type="EC" id="6.3.2.1" evidence="1"/>
<dbReference type="EMBL" id="CP001186">
    <property type="protein sequence ID" value="ACK93038.1"/>
    <property type="molecule type" value="Genomic_DNA"/>
</dbReference>
<dbReference type="RefSeq" id="WP_000707008.1">
    <property type="nucleotide sequence ID" value="NC_011772.1"/>
</dbReference>
<dbReference type="SMR" id="B7IPB8"/>
<dbReference type="KEGG" id="bcg:BCG9842_B3749"/>
<dbReference type="HOGENOM" id="CLU_047148_0_0_9"/>
<dbReference type="UniPathway" id="UPA00028">
    <property type="reaction ID" value="UER00005"/>
</dbReference>
<dbReference type="Proteomes" id="UP000006744">
    <property type="component" value="Chromosome"/>
</dbReference>
<dbReference type="GO" id="GO:0005829">
    <property type="term" value="C:cytosol"/>
    <property type="evidence" value="ECO:0007669"/>
    <property type="project" value="TreeGrafter"/>
</dbReference>
<dbReference type="GO" id="GO:0005524">
    <property type="term" value="F:ATP binding"/>
    <property type="evidence" value="ECO:0007669"/>
    <property type="project" value="UniProtKB-KW"/>
</dbReference>
<dbReference type="GO" id="GO:0004592">
    <property type="term" value="F:pantoate-beta-alanine ligase activity"/>
    <property type="evidence" value="ECO:0007669"/>
    <property type="project" value="UniProtKB-UniRule"/>
</dbReference>
<dbReference type="GO" id="GO:0015940">
    <property type="term" value="P:pantothenate biosynthetic process"/>
    <property type="evidence" value="ECO:0007669"/>
    <property type="project" value="UniProtKB-UniRule"/>
</dbReference>
<dbReference type="CDD" id="cd00560">
    <property type="entry name" value="PanC"/>
    <property type="match status" value="1"/>
</dbReference>
<dbReference type="FunFam" id="3.30.1300.10:FF:000001">
    <property type="entry name" value="Pantothenate synthetase"/>
    <property type="match status" value="1"/>
</dbReference>
<dbReference type="FunFam" id="3.40.50.620:FF:000013">
    <property type="entry name" value="Pantothenate synthetase"/>
    <property type="match status" value="1"/>
</dbReference>
<dbReference type="Gene3D" id="3.40.50.620">
    <property type="entry name" value="HUPs"/>
    <property type="match status" value="1"/>
</dbReference>
<dbReference type="Gene3D" id="3.30.1300.10">
    <property type="entry name" value="Pantoate-beta-alanine ligase, C-terminal domain"/>
    <property type="match status" value="1"/>
</dbReference>
<dbReference type="HAMAP" id="MF_00158">
    <property type="entry name" value="PanC"/>
    <property type="match status" value="1"/>
</dbReference>
<dbReference type="InterPro" id="IPR004821">
    <property type="entry name" value="Cyt_trans-like"/>
</dbReference>
<dbReference type="InterPro" id="IPR003721">
    <property type="entry name" value="Pantoate_ligase"/>
</dbReference>
<dbReference type="InterPro" id="IPR042176">
    <property type="entry name" value="Pantoate_ligase_C"/>
</dbReference>
<dbReference type="InterPro" id="IPR014729">
    <property type="entry name" value="Rossmann-like_a/b/a_fold"/>
</dbReference>
<dbReference type="NCBIfam" id="TIGR00125">
    <property type="entry name" value="cyt_tran_rel"/>
    <property type="match status" value="1"/>
</dbReference>
<dbReference type="NCBIfam" id="TIGR00018">
    <property type="entry name" value="panC"/>
    <property type="match status" value="1"/>
</dbReference>
<dbReference type="PANTHER" id="PTHR21299">
    <property type="entry name" value="CYTIDYLATE KINASE/PANTOATE-BETA-ALANINE LIGASE"/>
    <property type="match status" value="1"/>
</dbReference>
<dbReference type="PANTHER" id="PTHR21299:SF1">
    <property type="entry name" value="PANTOATE--BETA-ALANINE LIGASE"/>
    <property type="match status" value="1"/>
</dbReference>
<dbReference type="Pfam" id="PF02569">
    <property type="entry name" value="Pantoate_ligase"/>
    <property type="match status" value="1"/>
</dbReference>
<dbReference type="SUPFAM" id="SSF52374">
    <property type="entry name" value="Nucleotidylyl transferase"/>
    <property type="match status" value="1"/>
</dbReference>
<organism>
    <name type="scientific">Bacillus cereus (strain G9842)</name>
    <dbReference type="NCBI Taxonomy" id="405531"/>
    <lineage>
        <taxon>Bacteria</taxon>
        <taxon>Bacillati</taxon>
        <taxon>Bacillota</taxon>
        <taxon>Bacilli</taxon>
        <taxon>Bacillales</taxon>
        <taxon>Bacillaceae</taxon>
        <taxon>Bacillus</taxon>
        <taxon>Bacillus cereus group</taxon>
    </lineage>
</organism>
<comment type="function">
    <text evidence="1">Catalyzes the condensation of pantoate with beta-alanine in an ATP-dependent reaction via a pantoyl-adenylate intermediate.</text>
</comment>
<comment type="catalytic activity">
    <reaction evidence="1">
        <text>(R)-pantoate + beta-alanine + ATP = (R)-pantothenate + AMP + diphosphate + H(+)</text>
        <dbReference type="Rhea" id="RHEA:10912"/>
        <dbReference type="ChEBI" id="CHEBI:15378"/>
        <dbReference type="ChEBI" id="CHEBI:15980"/>
        <dbReference type="ChEBI" id="CHEBI:29032"/>
        <dbReference type="ChEBI" id="CHEBI:30616"/>
        <dbReference type="ChEBI" id="CHEBI:33019"/>
        <dbReference type="ChEBI" id="CHEBI:57966"/>
        <dbReference type="ChEBI" id="CHEBI:456215"/>
        <dbReference type="EC" id="6.3.2.1"/>
    </reaction>
</comment>
<comment type="pathway">
    <text evidence="1">Cofactor biosynthesis; (R)-pantothenate biosynthesis; (R)-pantothenate from (R)-pantoate and beta-alanine: step 1/1.</text>
</comment>
<comment type="subunit">
    <text evidence="1">Homodimer.</text>
</comment>
<comment type="subcellular location">
    <subcellularLocation>
        <location evidence="1">Cytoplasm</location>
    </subcellularLocation>
</comment>
<comment type="miscellaneous">
    <text evidence="1">The reaction proceeds by a bi uni uni bi ping pong mechanism.</text>
</comment>
<comment type="similarity">
    <text evidence="1">Belongs to the pantothenate synthetase family.</text>
</comment>
<accession>B7IPB8</accession>
<feature type="chain" id="PRO_1000118141" description="Pantothenate synthetase">
    <location>
        <begin position="1"/>
        <end position="282"/>
    </location>
</feature>
<feature type="active site" description="Proton donor" evidence="1">
    <location>
        <position position="37"/>
    </location>
</feature>
<feature type="binding site" evidence="1">
    <location>
        <begin position="30"/>
        <end position="37"/>
    </location>
    <ligand>
        <name>ATP</name>
        <dbReference type="ChEBI" id="CHEBI:30616"/>
    </ligand>
</feature>
<feature type="binding site" evidence="1">
    <location>
        <position position="61"/>
    </location>
    <ligand>
        <name>(R)-pantoate</name>
        <dbReference type="ChEBI" id="CHEBI:15980"/>
    </ligand>
</feature>
<feature type="binding site" evidence="1">
    <location>
        <position position="61"/>
    </location>
    <ligand>
        <name>beta-alanine</name>
        <dbReference type="ChEBI" id="CHEBI:57966"/>
    </ligand>
</feature>
<feature type="binding site" evidence="1">
    <location>
        <begin position="147"/>
        <end position="150"/>
    </location>
    <ligand>
        <name>ATP</name>
        <dbReference type="ChEBI" id="CHEBI:30616"/>
    </ligand>
</feature>
<feature type="binding site" evidence="1">
    <location>
        <position position="153"/>
    </location>
    <ligand>
        <name>(R)-pantoate</name>
        <dbReference type="ChEBI" id="CHEBI:15980"/>
    </ligand>
</feature>
<feature type="binding site" evidence="1">
    <location>
        <position position="176"/>
    </location>
    <ligand>
        <name>ATP</name>
        <dbReference type="ChEBI" id="CHEBI:30616"/>
    </ligand>
</feature>
<feature type="binding site" evidence="1">
    <location>
        <begin position="184"/>
        <end position="187"/>
    </location>
    <ligand>
        <name>ATP</name>
        <dbReference type="ChEBI" id="CHEBI:30616"/>
    </ligand>
</feature>
<sequence length="282" mass="31958">MKIVTTVQEMQQITNELHASGKSIGFVPTMGYLHEGHATLLRKAREENEIVVLSVFVNPLQFGPNEDLDRYPRDIDRDENVAKENGVDYLFYPSVEEMYPSEQTTTVEVVKRTDVLCGKQRPGHFAGVATVLMKLFNITLPTRAYFGMKDAQQVAVIEGFVTDFNIPVTIVPVDIVREEDGLAKSSRNVYLSQDEREEALHLYRSLCIAKERIEAGERNPEIITNLVKEYIETHTKGTVDYADLYAYPSLTMVEKVEGRIILAIAVKFENVRLIDNITLTVK</sequence>
<protein>
    <recommendedName>
        <fullName evidence="1">Pantothenate synthetase</fullName>
        <shortName evidence="1">PS</shortName>
        <ecNumber evidence="1">6.3.2.1</ecNumber>
    </recommendedName>
    <alternativeName>
        <fullName evidence="1">Pantoate--beta-alanine ligase</fullName>
    </alternativeName>
    <alternativeName>
        <fullName evidence="1">Pantoate-activating enzyme</fullName>
    </alternativeName>
</protein>
<reference key="1">
    <citation type="submission" date="2008-10" db="EMBL/GenBank/DDBJ databases">
        <title>Genome sequence of Bacillus cereus G9842.</title>
        <authorList>
            <person name="Dodson R.J."/>
            <person name="Durkin A.S."/>
            <person name="Rosovitz M.J."/>
            <person name="Rasko D.A."/>
            <person name="Hoffmaster A."/>
            <person name="Ravel J."/>
            <person name="Sutton G."/>
        </authorList>
    </citation>
    <scope>NUCLEOTIDE SEQUENCE [LARGE SCALE GENOMIC DNA]</scope>
    <source>
        <strain>G9842</strain>
    </source>
</reference>
<evidence type="ECO:0000255" key="1">
    <source>
        <dbReference type="HAMAP-Rule" id="MF_00158"/>
    </source>
</evidence>
<proteinExistence type="inferred from homology"/>
<gene>
    <name evidence="1" type="primary">panC</name>
    <name type="ordered locus">BCG9842_B3749</name>
</gene>